<feature type="initiator methionine" description="Removed" evidence="1">
    <location>
        <position position="1"/>
    </location>
</feature>
<feature type="chain" id="PRO_0000168400" description="L-lactate dehydrogenase">
    <location>
        <begin position="2"/>
        <end position="327"/>
    </location>
</feature>
<feature type="active site" description="Proton acceptor" evidence="2">
    <location>
        <position position="179"/>
    </location>
</feature>
<feature type="binding site" evidence="2">
    <location>
        <position position="18"/>
    </location>
    <ligand>
        <name>NAD(+)</name>
        <dbReference type="ChEBI" id="CHEBI:57540"/>
    </ligand>
</feature>
<feature type="binding site" evidence="2">
    <location>
        <position position="39"/>
    </location>
    <ligand>
        <name>NAD(+)</name>
        <dbReference type="ChEBI" id="CHEBI:57540"/>
    </ligand>
</feature>
<feature type="binding site" evidence="2">
    <location>
        <position position="44"/>
    </location>
    <ligand>
        <name>NAD(+)</name>
        <dbReference type="ChEBI" id="CHEBI:57540"/>
    </ligand>
</feature>
<feature type="binding site" evidence="2">
    <location>
        <position position="69"/>
    </location>
    <ligand>
        <name>NAD(+)</name>
        <dbReference type="ChEBI" id="CHEBI:57540"/>
    </ligand>
</feature>
<feature type="binding site" evidence="2">
    <location>
        <begin position="83"/>
        <end position="84"/>
    </location>
    <ligand>
        <name>NAD(+)</name>
        <dbReference type="ChEBI" id="CHEBI:57540"/>
    </ligand>
</feature>
<feature type="binding site" evidence="2">
    <location>
        <position position="86"/>
    </location>
    <ligand>
        <name>substrate</name>
    </ligand>
</feature>
<feature type="binding site" evidence="2">
    <location>
        <position position="92"/>
    </location>
    <ligand>
        <name>substrate</name>
    </ligand>
</feature>
<feature type="binding site" evidence="2">
    <location>
        <begin position="122"/>
        <end position="124"/>
    </location>
    <ligand>
        <name>NAD(+)</name>
        <dbReference type="ChEBI" id="CHEBI:57540"/>
    </ligand>
</feature>
<feature type="binding site" evidence="2">
    <location>
        <begin position="124"/>
        <end position="127"/>
    </location>
    <ligand>
        <name>substrate</name>
    </ligand>
</feature>
<feature type="binding site" evidence="2">
    <location>
        <position position="147"/>
    </location>
    <ligand>
        <name>NAD(+)</name>
        <dbReference type="ChEBI" id="CHEBI:57540"/>
    </ligand>
</feature>
<feature type="binding site" evidence="2">
    <location>
        <begin position="152"/>
        <end position="155"/>
    </location>
    <ligand>
        <name>substrate</name>
    </ligand>
</feature>
<feature type="binding site" evidence="2">
    <location>
        <position position="157"/>
    </location>
    <ligand>
        <name>beta-D-fructose 1,6-bisphosphate</name>
        <dbReference type="ChEBI" id="CHEBI:32966"/>
        <note>allosteric activator</note>
    </ligand>
</feature>
<feature type="binding site" evidence="2">
    <location>
        <position position="172"/>
    </location>
    <ligand>
        <name>beta-D-fructose 1,6-bisphosphate</name>
        <dbReference type="ChEBI" id="CHEBI:32966"/>
        <note>allosteric activator</note>
    </ligand>
</feature>
<feature type="binding site" evidence="2">
    <location>
        <position position="233"/>
    </location>
    <ligand>
        <name>substrate</name>
    </ligand>
</feature>
<feature type="modified residue" description="Phosphotyrosine" evidence="2">
    <location>
        <position position="224"/>
    </location>
</feature>
<evidence type="ECO:0000250" key="1"/>
<evidence type="ECO:0000255" key="2">
    <source>
        <dbReference type="HAMAP-Rule" id="MF_00488"/>
    </source>
</evidence>
<evidence type="ECO:0000305" key="3"/>
<comment type="function">
    <text evidence="2">Catalyzes the conversion of lactate to pyruvate.</text>
</comment>
<comment type="catalytic activity">
    <reaction evidence="2">
        <text>(S)-lactate + NAD(+) = pyruvate + NADH + H(+)</text>
        <dbReference type="Rhea" id="RHEA:23444"/>
        <dbReference type="ChEBI" id="CHEBI:15361"/>
        <dbReference type="ChEBI" id="CHEBI:15378"/>
        <dbReference type="ChEBI" id="CHEBI:16651"/>
        <dbReference type="ChEBI" id="CHEBI:57540"/>
        <dbReference type="ChEBI" id="CHEBI:57945"/>
        <dbReference type="EC" id="1.1.1.27"/>
    </reaction>
</comment>
<comment type="activity regulation">
    <text evidence="2">Allosterically activated by fructose 1,6-bisphosphate (FBP).</text>
</comment>
<comment type="pathway">
    <text evidence="2">Fermentation; pyruvate fermentation to lactate; (S)-lactate from pyruvate: step 1/1.</text>
</comment>
<comment type="subunit">
    <text evidence="2">Homotetramer.</text>
</comment>
<comment type="subcellular location">
    <subcellularLocation>
        <location evidence="2">Cytoplasm</location>
    </subcellularLocation>
</comment>
<comment type="similarity">
    <text evidence="2 3">Belongs to the LDH/MDH superfamily. LDH family.</text>
</comment>
<gene>
    <name evidence="2" type="primary">ldh</name>
    <name type="ordered locus">SpyM3_0809</name>
</gene>
<protein>
    <recommendedName>
        <fullName evidence="2">L-lactate dehydrogenase</fullName>
        <shortName evidence="2">L-LDH</shortName>
        <ecNumber evidence="2">1.1.1.27</ecNumber>
    </recommendedName>
</protein>
<proteinExistence type="inferred from homology"/>
<name>LDH_STRP3</name>
<dbReference type="EC" id="1.1.1.27" evidence="2"/>
<dbReference type="EMBL" id="AE014074">
    <property type="protein sequence ID" value="AAM79416.1"/>
    <property type="molecule type" value="Genomic_DNA"/>
</dbReference>
<dbReference type="RefSeq" id="WP_002984645.1">
    <property type="nucleotide sequence ID" value="NC_004070.1"/>
</dbReference>
<dbReference type="SMR" id="P0DC18"/>
<dbReference type="KEGG" id="spg:SpyM3_0809"/>
<dbReference type="HOGENOM" id="CLU_045401_1_1_9"/>
<dbReference type="UniPathway" id="UPA00554">
    <property type="reaction ID" value="UER00611"/>
</dbReference>
<dbReference type="Proteomes" id="UP000000564">
    <property type="component" value="Chromosome"/>
</dbReference>
<dbReference type="GO" id="GO:0005737">
    <property type="term" value="C:cytoplasm"/>
    <property type="evidence" value="ECO:0007669"/>
    <property type="project" value="UniProtKB-SubCell"/>
</dbReference>
<dbReference type="GO" id="GO:0004459">
    <property type="term" value="F:L-lactate dehydrogenase activity"/>
    <property type="evidence" value="ECO:0007669"/>
    <property type="project" value="UniProtKB-UniRule"/>
</dbReference>
<dbReference type="GO" id="GO:0006096">
    <property type="term" value="P:glycolytic process"/>
    <property type="evidence" value="ECO:0007669"/>
    <property type="project" value="UniProtKB-UniRule"/>
</dbReference>
<dbReference type="GO" id="GO:0006089">
    <property type="term" value="P:lactate metabolic process"/>
    <property type="evidence" value="ECO:0007669"/>
    <property type="project" value="TreeGrafter"/>
</dbReference>
<dbReference type="CDD" id="cd05291">
    <property type="entry name" value="HicDH_like"/>
    <property type="match status" value="1"/>
</dbReference>
<dbReference type="FunFam" id="3.40.50.720:FF:000018">
    <property type="entry name" value="Malate dehydrogenase"/>
    <property type="match status" value="1"/>
</dbReference>
<dbReference type="Gene3D" id="3.90.110.10">
    <property type="entry name" value="Lactate dehydrogenase/glycoside hydrolase, family 4, C-terminal"/>
    <property type="match status" value="1"/>
</dbReference>
<dbReference type="Gene3D" id="3.40.50.720">
    <property type="entry name" value="NAD(P)-binding Rossmann-like Domain"/>
    <property type="match status" value="1"/>
</dbReference>
<dbReference type="HAMAP" id="MF_00488">
    <property type="entry name" value="Lactate_dehydrog"/>
    <property type="match status" value="1"/>
</dbReference>
<dbReference type="InterPro" id="IPR001557">
    <property type="entry name" value="L-lactate/malate_DH"/>
</dbReference>
<dbReference type="InterPro" id="IPR011304">
    <property type="entry name" value="L-lactate_DH"/>
</dbReference>
<dbReference type="InterPro" id="IPR018177">
    <property type="entry name" value="L-lactate_DH_AS"/>
</dbReference>
<dbReference type="InterPro" id="IPR022383">
    <property type="entry name" value="Lactate/malate_DH_C"/>
</dbReference>
<dbReference type="InterPro" id="IPR001236">
    <property type="entry name" value="Lactate/malate_DH_N"/>
</dbReference>
<dbReference type="InterPro" id="IPR015955">
    <property type="entry name" value="Lactate_DH/Glyco_Ohase_4_C"/>
</dbReference>
<dbReference type="InterPro" id="IPR036291">
    <property type="entry name" value="NAD(P)-bd_dom_sf"/>
</dbReference>
<dbReference type="NCBIfam" id="TIGR01771">
    <property type="entry name" value="L-LDH-NAD"/>
    <property type="match status" value="1"/>
</dbReference>
<dbReference type="NCBIfam" id="NF000824">
    <property type="entry name" value="PRK00066.1"/>
    <property type="match status" value="1"/>
</dbReference>
<dbReference type="PANTHER" id="PTHR43128">
    <property type="entry name" value="L-2-HYDROXYCARBOXYLATE DEHYDROGENASE (NAD(P)(+))"/>
    <property type="match status" value="1"/>
</dbReference>
<dbReference type="PANTHER" id="PTHR43128:SF16">
    <property type="entry name" value="L-LACTATE DEHYDROGENASE"/>
    <property type="match status" value="1"/>
</dbReference>
<dbReference type="Pfam" id="PF02866">
    <property type="entry name" value="Ldh_1_C"/>
    <property type="match status" value="1"/>
</dbReference>
<dbReference type="Pfam" id="PF00056">
    <property type="entry name" value="Ldh_1_N"/>
    <property type="match status" value="1"/>
</dbReference>
<dbReference type="PIRSF" id="PIRSF000102">
    <property type="entry name" value="Lac_mal_DH"/>
    <property type="match status" value="1"/>
</dbReference>
<dbReference type="PRINTS" id="PR00086">
    <property type="entry name" value="LLDHDRGNASE"/>
</dbReference>
<dbReference type="SUPFAM" id="SSF56327">
    <property type="entry name" value="LDH C-terminal domain-like"/>
    <property type="match status" value="1"/>
</dbReference>
<dbReference type="SUPFAM" id="SSF51735">
    <property type="entry name" value="NAD(P)-binding Rossmann-fold domains"/>
    <property type="match status" value="1"/>
</dbReference>
<dbReference type="PROSITE" id="PS00064">
    <property type="entry name" value="L_LDH"/>
    <property type="match status" value="1"/>
</dbReference>
<accession>P0DC18</accession>
<accession>P65260</accession>
<accession>Q99ZN5</accession>
<keyword id="KW-0021">Allosteric enzyme</keyword>
<keyword id="KW-0963">Cytoplasm</keyword>
<keyword id="KW-0520">NAD</keyword>
<keyword id="KW-0560">Oxidoreductase</keyword>
<keyword id="KW-0597">Phosphoprotein</keyword>
<sequence>MTATKQHKKVILVGDGAVGSSYAFALVTQNIAQELGIIDIFKEKTQGDAEDLSHALAFTSPKKIYAADYSDCHDADLVVLTAGAPQKPGETRLDLVEKNLRINKEVVTQIVASGFKGIFLVAANPVDVLTYSTWKFSGFPKERVIGSGTSLDSARFRQALAAKIGVDARSVHAYIMGEHGDSEFAVWSHANVAGVGLYDWLQANRDIDEQGLVDLFISVRDAAYSIINKKGATFYGIAVALARITKAILDDENAVLPLSVFQEGQYEGVEDCYIGQPAIVGAYGIVRPVNIPLNDAELQKMQASANQLKAIIDEAFAKEEFASAAKN</sequence>
<organism>
    <name type="scientific">Streptococcus pyogenes serotype M3 (strain ATCC BAA-595 / MGAS315)</name>
    <dbReference type="NCBI Taxonomy" id="198466"/>
    <lineage>
        <taxon>Bacteria</taxon>
        <taxon>Bacillati</taxon>
        <taxon>Bacillota</taxon>
        <taxon>Bacilli</taxon>
        <taxon>Lactobacillales</taxon>
        <taxon>Streptococcaceae</taxon>
        <taxon>Streptococcus</taxon>
    </lineage>
</organism>
<reference key="1">
    <citation type="journal article" date="2002" name="Proc. Natl. Acad. Sci. U.S.A.">
        <title>Genome sequence of a serotype M3 strain of group A Streptococcus: phage-encoded toxins, the high-virulence phenotype, and clone emergence.</title>
        <authorList>
            <person name="Beres S.B."/>
            <person name="Sylva G.L."/>
            <person name="Barbian K.D."/>
            <person name="Lei B."/>
            <person name="Hoff J.S."/>
            <person name="Mammarella N.D."/>
            <person name="Liu M.-Y."/>
            <person name="Smoot J.C."/>
            <person name="Porcella S.F."/>
            <person name="Parkins L.D."/>
            <person name="Campbell D.S."/>
            <person name="Smith T.M."/>
            <person name="McCormick J.K."/>
            <person name="Leung D.Y.M."/>
            <person name="Schlievert P.M."/>
            <person name="Musser J.M."/>
        </authorList>
    </citation>
    <scope>NUCLEOTIDE SEQUENCE [LARGE SCALE GENOMIC DNA]</scope>
    <source>
        <strain>ATCC BAA-595 / MGAS315</strain>
    </source>
</reference>